<organism>
    <name type="scientific">Mycobacterium leprae (strain Br4923)</name>
    <dbReference type="NCBI Taxonomy" id="561304"/>
    <lineage>
        <taxon>Bacteria</taxon>
        <taxon>Bacillati</taxon>
        <taxon>Actinomycetota</taxon>
        <taxon>Actinomycetes</taxon>
        <taxon>Mycobacteriales</taxon>
        <taxon>Mycobacteriaceae</taxon>
        <taxon>Mycobacterium</taxon>
    </lineage>
</organism>
<proteinExistence type="inferred from homology"/>
<feature type="chain" id="PRO_1000191064" description="2-C-methyl-D-erythritol 4-phosphate cytidylyltransferase">
    <location>
        <begin position="1"/>
        <end position="241"/>
    </location>
</feature>
<feature type="site" description="Transition state stabilizer" evidence="1">
    <location>
        <position position="20"/>
    </location>
</feature>
<feature type="site" description="Transition state stabilizer" evidence="1">
    <location>
        <position position="27"/>
    </location>
</feature>
<feature type="site" description="Positions MEP for the nucleophilic attack" evidence="1">
    <location>
        <position position="168"/>
    </location>
</feature>
<feature type="site" description="Positions MEP for the nucleophilic attack" evidence="1">
    <location>
        <position position="225"/>
    </location>
</feature>
<accession>B8ZUA7</accession>
<protein>
    <recommendedName>
        <fullName evidence="1">2-C-methyl-D-erythritol 4-phosphate cytidylyltransferase</fullName>
        <ecNumber evidence="1">2.7.7.60</ecNumber>
    </recommendedName>
    <alternativeName>
        <fullName evidence="1">4-diphosphocytidyl-2C-methyl-D-erythritol synthase</fullName>
    </alternativeName>
    <alternativeName>
        <fullName evidence="1">MEP cytidylyltransferase</fullName>
        <shortName evidence="1">MCT</shortName>
    </alternativeName>
</protein>
<name>ISPD_MYCLB</name>
<reference key="1">
    <citation type="journal article" date="2009" name="Nat. Genet.">
        <title>Comparative genomic and phylogeographic analysis of Mycobacterium leprae.</title>
        <authorList>
            <person name="Monot M."/>
            <person name="Honore N."/>
            <person name="Garnier T."/>
            <person name="Zidane N."/>
            <person name="Sherafi D."/>
            <person name="Paniz-Mondolfi A."/>
            <person name="Matsuoka M."/>
            <person name="Taylor G.M."/>
            <person name="Donoghue H.D."/>
            <person name="Bouwman A."/>
            <person name="Mays S."/>
            <person name="Watson C."/>
            <person name="Lockwood D."/>
            <person name="Khamispour A."/>
            <person name="Dowlati Y."/>
            <person name="Jianping S."/>
            <person name="Rea T.H."/>
            <person name="Vera-Cabrera L."/>
            <person name="Stefani M.M."/>
            <person name="Banu S."/>
            <person name="Macdonald M."/>
            <person name="Sapkota B.R."/>
            <person name="Spencer J.S."/>
            <person name="Thomas J."/>
            <person name="Harshman K."/>
            <person name="Singh P."/>
            <person name="Busso P."/>
            <person name="Gattiker A."/>
            <person name="Rougemont J."/>
            <person name="Brennan P.J."/>
            <person name="Cole S.T."/>
        </authorList>
    </citation>
    <scope>NUCLEOTIDE SEQUENCE [LARGE SCALE GENOMIC DNA]</scope>
    <source>
        <strain>Br4923</strain>
    </source>
</reference>
<sequence length="241" mass="24980">MAVATGTVVAVVPAAGAGKRLAAGIPKAFCELDGRTLVERAVVGLLESGVVDHVVVAVPADRIAQTQWVLSQRLANSAGQHATVVAGGADRTKSVCQALATLPAPSRVGAPEFILVHDAARALTPARLIVRVVDALRAGHTAVVPALPLSDTIKAVDANGMVLGTPARVGLRAVQTPQGFATELLWCAYQRGPHLDAVDFTDDASLVEHLGGQVQVVAGDPLAFKITTQLDLLLAKKILRR</sequence>
<dbReference type="EC" id="2.7.7.60" evidence="1"/>
<dbReference type="EMBL" id="FM211192">
    <property type="protein sequence ID" value="CAR70414.1"/>
    <property type="molecule type" value="Genomic_DNA"/>
</dbReference>
<dbReference type="SMR" id="B8ZUA7"/>
<dbReference type="KEGG" id="mlb:MLBr00321"/>
<dbReference type="HOGENOM" id="CLU_061281_1_1_11"/>
<dbReference type="UniPathway" id="UPA00056">
    <property type="reaction ID" value="UER00093"/>
</dbReference>
<dbReference type="Proteomes" id="UP000006900">
    <property type="component" value="Chromosome"/>
</dbReference>
<dbReference type="GO" id="GO:0050518">
    <property type="term" value="F:2-C-methyl-D-erythritol 4-phosphate cytidylyltransferase activity"/>
    <property type="evidence" value="ECO:0007669"/>
    <property type="project" value="UniProtKB-UniRule"/>
</dbReference>
<dbReference type="GO" id="GO:0019288">
    <property type="term" value="P:isopentenyl diphosphate biosynthetic process, methylerythritol 4-phosphate pathway"/>
    <property type="evidence" value="ECO:0007669"/>
    <property type="project" value="UniProtKB-UniRule"/>
</dbReference>
<dbReference type="CDD" id="cd02516">
    <property type="entry name" value="CDP-ME_synthetase"/>
    <property type="match status" value="1"/>
</dbReference>
<dbReference type="FunFam" id="3.90.550.10:FF:000003">
    <property type="entry name" value="2-C-methyl-D-erythritol 4-phosphate cytidylyltransferase"/>
    <property type="match status" value="1"/>
</dbReference>
<dbReference type="Gene3D" id="3.90.550.10">
    <property type="entry name" value="Spore Coat Polysaccharide Biosynthesis Protein SpsA, Chain A"/>
    <property type="match status" value="1"/>
</dbReference>
<dbReference type="HAMAP" id="MF_00108">
    <property type="entry name" value="IspD"/>
    <property type="match status" value="1"/>
</dbReference>
<dbReference type="InterPro" id="IPR001228">
    <property type="entry name" value="IspD"/>
</dbReference>
<dbReference type="InterPro" id="IPR034683">
    <property type="entry name" value="IspD/TarI"/>
</dbReference>
<dbReference type="InterPro" id="IPR050088">
    <property type="entry name" value="IspD/TarI_cytidylyltransf_bact"/>
</dbReference>
<dbReference type="InterPro" id="IPR018294">
    <property type="entry name" value="ISPD_synthase_CS"/>
</dbReference>
<dbReference type="InterPro" id="IPR029044">
    <property type="entry name" value="Nucleotide-diphossugar_trans"/>
</dbReference>
<dbReference type="NCBIfam" id="TIGR00453">
    <property type="entry name" value="ispD"/>
    <property type="match status" value="1"/>
</dbReference>
<dbReference type="PANTHER" id="PTHR32125">
    <property type="entry name" value="2-C-METHYL-D-ERYTHRITOL 4-PHOSPHATE CYTIDYLYLTRANSFERASE, CHLOROPLASTIC"/>
    <property type="match status" value="1"/>
</dbReference>
<dbReference type="PANTHER" id="PTHR32125:SF4">
    <property type="entry name" value="2-C-METHYL-D-ERYTHRITOL 4-PHOSPHATE CYTIDYLYLTRANSFERASE, CHLOROPLASTIC"/>
    <property type="match status" value="1"/>
</dbReference>
<dbReference type="Pfam" id="PF01128">
    <property type="entry name" value="IspD"/>
    <property type="match status" value="1"/>
</dbReference>
<dbReference type="SUPFAM" id="SSF53448">
    <property type="entry name" value="Nucleotide-diphospho-sugar transferases"/>
    <property type="match status" value="1"/>
</dbReference>
<dbReference type="PROSITE" id="PS01295">
    <property type="entry name" value="ISPD"/>
    <property type="match status" value="1"/>
</dbReference>
<keyword id="KW-0414">Isoprene biosynthesis</keyword>
<keyword id="KW-0548">Nucleotidyltransferase</keyword>
<keyword id="KW-0808">Transferase</keyword>
<comment type="function">
    <text evidence="1">Catalyzes the formation of 4-diphosphocytidyl-2-C-methyl-D-erythritol from CTP and 2-C-methyl-D-erythritol 4-phosphate (MEP).</text>
</comment>
<comment type="catalytic activity">
    <reaction evidence="1">
        <text>2-C-methyl-D-erythritol 4-phosphate + CTP + H(+) = 4-CDP-2-C-methyl-D-erythritol + diphosphate</text>
        <dbReference type="Rhea" id="RHEA:13429"/>
        <dbReference type="ChEBI" id="CHEBI:15378"/>
        <dbReference type="ChEBI" id="CHEBI:33019"/>
        <dbReference type="ChEBI" id="CHEBI:37563"/>
        <dbReference type="ChEBI" id="CHEBI:57823"/>
        <dbReference type="ChEBI" id="CHEBI:58262"/>
        <dbReference type="EC" id="2.7.7.60"/>
    </reaction>
</comment>
<comment type="pathway">
    <text evidence="1">Isoprenoid biosynthesis; isopentenyl diphosphate biosynthesis via DXP pathway; isopentenyl diphosphate from 1-deoxy-D-xylulose 5-phosphate: step 2/6.</text>
</comment>
<comment type="similarity">
    <text evidence="1">Belongs to the IspD/TarI cytidylyltransferase family. IspD subfamily.</text>
</comment>
<evidence type="ECO:0000255" key="1">
    <source>
        <dbReference type="HAMAP-Rule" id="MF_00108"/>
    </source>
</evidence>
<gene>
    <name evidence="1" type="primary">ispD</name>
    <name type="ordered locus">MLBr00321</name>
</gene>